<accession>B4EBC4</accession>
<dbReference type="EC" id="2.1.1.163" evidence="1"/>
<dbReference type="EC" id="2.1.1.201" evidence="1"/>
<dbReference type="EMBL" id="AM747720">
    <property type="protein sequence ID" value="CAR51179.1"/>
    <property type="molecule type" value="Genomic_DNA"/>
</dbReference>
<dbReference type="RefSeq" id="WP_006477837.1">
    <property type="nucleotide sequence ID" value="NC_011000.1"/>
</dbReference>
<dbReference type="SMR" id="B4EBC4"/>
<dbReference type="GeneID" id="83049544"/>
<dbReference type="KEGG" id="bcj:BCAL0873"/>
<dbReference type="eggNOG" id="COG2226">
    <property type="taxonomic scope" value="Bacteria"/>
</dbReference>
<dbReference type="HOGENOM" id="CLU_037990_0_0_4"/>
<dbReference type="BioCyc" id="BCEN216591:G1G1V-969-MONOMER"/>
<dbReference type="UniPathway" id="UPA00079">
    <property type="reaction ID" value="UER00169"/>
</dbReference>
<dbReference type="UniPathway" id="UPA00232"/>
<dbReference type="Proteomes" id="UP000001035">
    <property type="component" value="Chromosome 1"/>
</dbReference>
<dbReference type="GO" id="GO:0008425">
    <property type="term" value="F:2-methoxy-6-polyprenyl-1,4-benzoquinol methyltransferase activity"/>
    <property type="evidence" value="ECO:0007669"/>
    <property type="project" value="UniProtKB-UniRule"/>
</dbReference>
<dbReference type="GO" id="GO:0043770">
    <property type="term" value="F:demethylmenaquinone methyltransferase activity"/>
    <property type="evidence" value="ECO:0007669"/>
    <property type="project" value="UniProtKB-UniRule"/>
</dbReference>
<dbReference type="GO" id="GO:0009060">
    <property type="term" value="P:aerobic respiration"/>
    <property type="evidence" value="ECO:0007669"/>
    <property type="project" value="UniProtKB-UniRule"/>
</dbReference>
<dbReference type="GO" id="GO:0009234">
    <property type="term" value="P:menaquinone biosynthetic process"/>
    <property type="evidence" value="ECO:0007669"/>
    <property type="project" value="UniProtKB-UniRule"/>
</dbReference>
<dbReference type="GO" id="GO:0032259">
    <property type="term" value="P:methylation"/>
    <property type="evidence" value="ECO:0007669"/>
    <property type="project" value="UniProtKB-KW"/>
</dbReference>
<dbReference type="CDD" id="cd02440">
    <property type="entry name" value="AdoMet_MTases"/>
    <property type="match status" value="1"/>
</dbReference>
<dbReference type="Gene3D" id="3.40.50.150">
    <property type="entry name" value="Vaccinia Virus protein VP39"/>
    <property type="match status" value="1"/>
</dbReference>
<dbReference type="HAMAP" id="MF_01813">
    <property type="entry name" value="MenG_UbiE_methyltr"/>
    <property type="match status" value="1"/>
</dbReference>
<dbReference type="InterPro" id="IPR029063">
    <property type="entry name" value="SAM-dependent_MTases_sf"/>
</dbReference>
<dbReference type="InterPro" id="IPR004033">
    <property type="entry name" value="UbiE/COQ5_MeTrFase"/>
</dbReference>
<dbReference type="InterPro" id="IPR023576">
    <property type="entry name" value="UbiE/COQ5_MeTrFase_CS"/>
</dbReference>
<dbReference type="NCBIfam" id="TIGR01934">
    <property type="entry name" value="MenG_MenH_UbiE"/>
    <property type="match status" value="1"/>
</dbReference>
<dbReference type="NCBIfam" id="NF001240">
    <property type="entry name" value="PRK00216.1-1"/>
    <property type="match status" value="1"/>
</dbReference>
<dbReference type="PANTHER" id="PTHR43591:SF24">
    <property type="entry name" value="2-METHOXY-6-POLYPRENYL-1,4-BENZOQUINOL METHYLASE, MITOCHONDRIAL"/>
    <property type="match status" value="1"/>
</dbReference>
<dbReference type="PANTHER" id="PTHR43591">
    <property type="entry name" value="METHYLTRANSFERASE"/>
    <property type="match status" value="1"/>
</dbReference>
<dbReference type="Pfam" id="PF01209">
    <property type="entry name" value="Ubie_methyltran"/>
    <property type="match status" value="1"/>
</dbReference>
<dbReference type="SUPFAM" id="SSF53335">
    <property type="entry name" value="S-adenosyl-L-methionine-dependent methyltransferases"/>
    <property type="match status" value="1"/>
</dbReference>
<dbReference type="PROSITE" id="PS51608">
    <property type="entry name" value="SAM_MT_UBIE"/>
    <property type="match status" value="1"/>
</dbReference>
<dbReference type="PROSITE" id="PS01183">
    <property type="entry name" value="UBIE_1"/>
    <property type="match status" value="1"/>
</dbReference>
<dbReference type="PROSITE" id="PS01184">
    <property type="entry name" value="UBIE_2"/>
    <property type="match status" value="1"/>
</dbReference>
<reference key="1">
    <citation type="journal article" date="2009" name="J. Bacteriol.">
        <title>The genome of Burkholderia cenocepacia J2315, an epidemic pathogen of cystic fibrosis patients.</title>
        <authorList>
            <person name="Holden M.T."/>
            <person name="Seth-Smith H.M."/>
            <person name="Crossman L.C."/>
            <person name="Sebaihia M."/>
            <person name="Bentley S.D."/>
            <person name="Cerdeno-Tarraga A.M."/>
            <person name="Thomson N.R."/>
            <person name="Bason N."/>
            <person name="Quail M.A."/>
            <person name="Sharp S."/>
            <person name="Cherevach I."/>
            <person name="Churcher C."/>
            <person name="Goodhead I."/>
            <person name="Hauser H."/>
            <person name="Holroyd N."/>
            <person name="Mungall K."/>
            <person name="Scott P."/>
            <person name="Walker D."/>
            <person name="White B."/>
            <person name="Rose H."/>
            <person name="Iversen P."/>
            <person name="Mil-Homens D."/>
            <person name="Rocha E.P."/>
            <person name="Fialho A.M."/>
            <person name="Baldwin A."/>
            <person name="Dowson C."/>
            <person name="Barrell B.G."/>
            <person name="Govan J.R."/>
            <person name="Vandamme P."/>
            <person name="Hart C.A."/>
            <person name="Mahenthiralingam E."/>
            <person name="Parkhill J."/>
        </authorList>
    </citation>
    <scope>NUCLEOTIDE SEQUENCE [LARGE SCALE GENOMIC DNA]</scope>
    <source>
        <strain>ATCC BAA-245 / DSM 16553 / LMG 16656 / NCTC 13227 / J2315 / CF5610</strain>
    </source>
</reference>
<sequence length="243" mass="27093">MSKTHFGFESVEENEKAKKVAGVFHSVASNYDLMNDLMSAGMHRAWKAFTIAQANVRPGFKVLDIAAGTGDLTKSFAKAAGPTGEVWHTDINESMLRVGRDRLLDKGVVTPSLLCDAEKIPFPDNYFDVVTVAFGLRNMTHKDAALAEMRRVTKPGGRVMVLEFSKVWDPLKKAYDLYSFKVLPWLGDKFAKDAESYRYLAESIRMHPDQDTLKTMMEQAGLDAVKYYNLSGGVVALHLGTKY</sequence>
<feature type="chain" id="PRO_1000187738" description="Ubiquinone/menaquinone biosynthesis C-methyltransferase UbiE">
    <location>
        <begin position="1"/>
        <end position="243"/>
    </location>
</feature>
<feature type="binding site" evidence="1">
    <location>
        <position position="69"/>
    </location>
    <ligand>
        <name>S-adenosyl-L-methionine</name>
        <dbReference type="ChEBI" id="CHEBI:59789"/>
    </ligand>
</feature>
<feature type="binding site" evidence="1">
    <location>
        <position position="90"/>
    </location>
    <ligand>
        <name>S-adenosyl-L-methionine</name>
        <dbReference type="ChEBI" id="CHEBI:59789"/>
    </ligand>
</feature>
<feature type="binding site" evidence="1">
    <location>
        <begin position="116"/>
        <end position="117"/>
    </location>
    <ligand>
        <name>S-adenosyl-L-methionine</name>
        <dbReference type="ChEBI" id="CHEBI:59789"/>
    </ligand>
</feature>
<gene>
    <name evidence="1" type="primary">ubiE</name>
    <name type="ordered locus">BceJ2315_08630</name>
    <name type="ORF">BCAL0873</name>
</gene>
<organism>
    <name type="scientific">Burkholderia cenocepacia (strain ATCC BAA-245 / DSM 16553 / LMG 16656 / NCTC 13227 / J2315 / CF5610)</name>
    <name type="common">Burkholderia cepacia (strain J2315)</name>
    <dbReference type="NCBI Taxonomy" id="216591"/>
    <lineage>
        <taxon>Bacteria</taxon>
        <taxon>Pseudomonadati</taxon>
        <taxon>Pseudomonadota</taxon>
        <taxon>Betaproteobacteria</taxon>
        <taxon>Burkholderiales</taxon>
        <taxon>Burkholderiaceae</taxon>
        <taxon>Burkholderia</taxon>
        <taxon>Burkholderia cepacia complex</taxon>
    </lineage>
</organism>
<evidence type="ECO:0000255" key="1">
    <source>
        <dbReference type="HAMAP-Rule" id="MF_01813"/>
    </source>
</evidence>
<name>UBIE_BURCJ</name>
<proteinExistence type="inferred from homology"/>
<protein>
    <recommendedName>
        <fullName evidence="1">Ubiquinone/menaquinone biosynthesis C-methyltransferase UbiE</fullName>
        <ecNumber evidence="1">2.1.1.163</ecNumber>
        <ecNumber evidence="1">2.1.1.201</ecNumber>
    </recommendedName>
    <alternativeName>
        <fullName evidence="1">2-methoxy-6-polyprenyl-1,4-benzoquinol methylase</fullName>
    </alternativeName>
    <alternativeName>
        <fullName evidence="1">Demethylmenaquinone methyltransferase</fullName>
    </alternativeName>
</protein>
<keyword id="KW-0474">Menaquinone biosynthesis</keyword>
<keyword id="KW-0489">Methyltransferase</keyword>
<keyword id="KW-0949">S-adenosyl-L-methionine</keyword>
<keyword id="KW-0808">Transferase</keyword>
<keyword id="KW-0831">Ubiquinone biosynthesis</keyword>
<comment type="function">
    <text evidence="1">Methyltransferase required for the conversion of demethylmenaquinol (DMKH2) to menaquinol (MKH2) and the conversion of 2-polyprenyl-6-methoxy-1,4-benzoquinol (DDMQH2) to 2-polyprenyl-3-methyl-6-methoxy-1,4-benzoquinol (DMQH2).</text>
</comment>
<comment type="catalytic activity">
    <reaction evidence="1">
        <text>a 2-demethylmenaquinol + S-adenosyl-L-methionine = a menaquinol + S-adenosyl-L-homocysteine + H(+)</text>
        <dbReference type="Rhea" id="RHEA:42640"/>
        <dbReference type="Rhea" id="RHEA-COMP:9539"/>
        <dbReference type="Rhea" id="RHEA-COMP:9563"/>
        <dbReference type="ChEBI" id="CHEBI:15378"/>
        <dbReference type="ChEBI" id="CHEBI:18151"/>
        <dbReference type="ChEBI" id="CHEBI:55437"/>
        <dbReference type="ChEBI" id="CHEBI:57856"/>
        <dbReference type="ChEBI" id="CHEBI:59789"/>
        <dbReference type="EC" id="2.1.1.163"/>
    </reaction>
</comment>
<comment type="catalytic activity">
    <reaction evidence="1">
        <text>a 2-methoxy-6-(all-trans-polyprenyl)benzene-1,4-diol + S-adenosyl-L-methionine = a 5-methoxy-2-methyl-3-(all-trans-polyprenyl)benzene-1,4-diol + S-adenosyl-L-homocysteine + H(+)</text>
        <dbReference type="Rhea" id="RHEA:28286"/>
        <dbReference type="Rhea" id="RHEA-COMP:10858"/>
        <dbReference type="Rhea" id="RHEA-COMP:10859"/>
        <dbReference type="ChEBI" id="CHEBI:15378"/>
        <dbReference type="ChEBI" id="CHEBI:57856"/>
        <dbReference type="ChEBI" id="CHEBI:59789"/>
        <dbReference type="ChEBI" id="CHEBI:84166"/>
        <dbReference type="ChEBI" id="CHEBI:84167"/>
        <dbReference type="EC" id="2.1.1.201"/>
    </reaction>
</comment>
<comment type="pathway">
    <text evidence="1">Quinol/quinone metabolism; menaquinone biosynthesis; menaquinol from 1,4-dihydroxy-2-naphthoate: step 2/2.</text>
</comment>
<comment type="pathway">
    <text evidence="1">Cofactor biosynthesis; ubiquinone biosynthesis.</text>
</comment>
<comment type="similarity">
    <text evidence="1">Belongs to the class I-like SAM-binding methyltransferase superfamily. MenG/UbiE family.</text>
</comment>